<keyword id="KW-0274">FAD</keyword>
<keyword id="KW-0285">Flavoprotein</keyword>
<keyword id="KW-0560">Oxidoreductase</keyword>
<proteinExistence type="inferred from homology"/>
<gene>
    <name evidence="1" type="primary">solA</name>
    <name type="ordered locus">SFV_1082</name>
</gene>
<protein>
    <recommendedName>
        <fullName evidence="1">N-methyl-L-tryptophan oxidase</fullName>
        <shortName evidence="1">MTOX</shortName>
        <ecNumber evidence="1">1.5.3.-</ecNumber>
    </recommendedName>
</protein>
<reference key="1">
    <citation type="journal article" date="2006" name="BMC Genomics">
        <title>Complete genome sequence of Shigella flexneri 5b and comparison with Shigella flexneri 2a.</title>
        <authorList>
            <person name="Nie H."/>
            <person name="Yang F."/>
            <person name="Zhang X."/>
            <person name="Yang J."/>
            <person name="Chen L."/>
            <person name="Wang J."/>
            <person name="Xiong Z."/>
            <person name="Peng J."/>
            <person name="Sun L."/>
            <person name="Dong J."/>
            <person name="Xue Y."/>
            <person name="Xu X."/>
            <person name="Chen S."/>
            <person name="Yao Z."/>
            <person name="Shen Y."/>
            <person name="Jin Q."/>
        </authorList>
    </citation>
    <scope>NUCLEOTIDE SEQUENCE [LARGE SCALE GENOMIC DNA]</scope>
    <source>
        <strain>8401</strain>
    </source>
</reference>
<evidence type="ECO:0000255" key="1">
    <source>
        <dbReference type="HAMAP-Rule" id="MF_00515"/>
    </source>
</evidence>
<accession>Q0T5X2</accession>
<name>MTOX_SHIF8</name>
<feature type="chain" id="PRO_1000050794" description="N-methyl-L-tryptophan oxidase">
    <location>
        <begin position="1"/>
        <end position="372"/>
    </location>
</feature>
<feature type="binding site" evidence="1">
    <location>
        <begin position="4"/>
        <end position="34"/>
    </location>
    <ligand>
        <name>FAD</name>
        <dbReference type="ChEBI" id="CHEBI:57692"/>
    </ligand>
</feature>
<feature type="modified residue" description="S-8alpha-FAD cysteine" evidence="1">
    <location>
        <position position="308"/>
    </location>
</feature>
<comment type="function">
    <text evidence="1">Catalyzes the oxidative demethylation of N-methyl-L-tryptophan.</text>
</comment>
<comment type="catalytic activity">
    <reaction evidence="1">
        <text>N(alpha)-methyl-L-tryptophan + O2 + H2O = L-tryptophan + formaldehyde + H2O2</text>
        <dbReference type="Rhea" id="RHEA:28006"/>
        <dbReference type="ChEBI" id="CHEBI:15377"/>
        <dbReference type="ChEBI" id="CHEBI:15379"/>
        <dbReference type="ChEBI" id="CHEBI:16240"/>
        <dbReference type="ChEBI" id="CHEBI:16842"/>
        <dbReference type="ChEBI" id="CHEBI:57283"/>
        <dbReference type="ChEBI" id="CHEBI:57912"/>
    </reaction>
</comment>
<comment type="cofactor">
    <cofactor evidence="1">
        <name>FAD</name>
        <dbReference type="ChEBI" id="CHEBI:57692"/>
    </cofactor>
    <text evidence="1">Binds 1 FAD per subunit.</text>
</comment>
<comment type="subunit">
    <text evidence="1">Monomer.</text>
</comment>
<comment type="similarity">
    <text evidence="1">Belongs to the MSOX/MTOX family. MTOX subfamily.</text>
</comment>
<sequence>MKYDLIIIGSGSVGAAAGYYATRAGLNVLMTDAHMPPHQHGSHHGDTRLIRHAYGEGEKYVPLVLRAQTLWDELSRHNEDDPIFVRSGVINLGPADSAFLANVAHSAEQWQLNVEKLDAQGIMARWPEIRVPDNYIGLFETDSGFLRSELAIKTWIQLAKEAGCAQLFNCPVTAIRHDDDGVTIETVDGEYQAKKAIVCAGTWVKDLLPELPVQPVRKVFAWYQADGRYSVKNKFPAFTGELPNGDQYYGFPAENDALKIGKHNGGQVIHSADERVPFAEVASDGSEAFPFLRNVLPGIGCCLYGAACTYDNSPDEDFIIDTLPGHDNTLLITGLSGHGFKFASVLGEIAADFAQDQKSDFDLTPFRLSRFQ</sequence>
<organism>
    <name type="scientific">Shigella flexneri serotype 5b (strain 8401)</name>
    <dbReference type="NCBI Taxonomy" id="373384"/>
    <lineage>
        <taxon>Bacteria</taxon>
        <taxon>Pseudomonadati</taxon>
        <taxon>Pseudomonadota</taxon>
        <taxon>Gammaproteobacteria</taxon>
        <taxon>Enterobacterales</taxon>
        <taxon>Enterobacteriaceae</taxon>
        <taxon>Shigella</taxon>
    </lineage>
</organism>
<dbReference type="EC" id="1.5.3.-" evidence="1"/>
<dbReference type="EMBL" id="CP000266">
    <property type="protein sequence ID" value="ABF03293.1"/>
    <property type="molecule type" value="Genomic_DNA"/>
</dbReference>
<dbReference type="RefSeq" id="WP_000872813.1">
    <property type="nucleotide sequence ID" value="NC_008258.1"/>
</dbReference>
<dbReference type="SMR" id="Q0T5X2"/>
<dbReference type="KEGG" id="sfv:SFV_1082"/>
<dbReference type="HOGENOM" id="CLU_007884_2_1_6"/>
<dbReference type="Proteomes" id="UP000000659">
    <property type="component" value="Chromosome"/>
</dbReference>
<dbReference type="GO" id="GO:0005829">
    <property type="term" value="C:cytosol"/>
    <property type="evidence" value="ECO:0007669"/>
    <property type="project" value="TreeGrafter"/>
</dbReference>
<dbReference type="GO" id="GO:0050660">
    <property type="term" value="F:flavin adenine dinucleotide binding"/>
    <property type="evidence" value="ECO:0007669"/>
    <property type="project" value="InterPro"/>
</dbReference>
<dbReference type="GO" id="GO:0050131">
    <property type="term" value="F:N-methyl-L-amino-acid oxidase activity"/>
    <property type="evidence" value="ECO:0007669"/>
    <property type="project" value="InterPro"/>
</dbReference>
<dbReference type="GO" id="GO:0008115">
    <property type="term" value="F:sarcosine oxidase activity"/>
    <property type="evidence" value="ECO:0007669"/>
    <property type="project" value="TreeGrafter"/>
</dbReference>
<dbReference type="Gene3D" id="3.30.9.10">
    <property type="entry name" value="D-Amino Acid Oxidase, subunit A, domain 2"/>
    <property type="match status" value="1"/>
</dbReference>
<dbReference type="Gene3D" id="3.50.50.60">
    <property type="entry name" value="FAD/NAD(P)-binding domain"/>
    <property type="match status" value="1"/>
</dbReference>
<dbReference type="HAMAP" id="MF_00515">
    <property type="entry name" value="MTOX"/>
    <property type="match status" value="1"/>
</dbReference>
<dbReference type="InterPro" id="IPR006076">
    <property type="entry name" value="FAD-dep_OxRdtase"/>
</dbReference>
<dbReference type="InterPro" id="IPR036188">
    <property type="entry name" value="FAD/NAD-bd_sf"/>
</dbReference>
<dbReference type="InterPro" id="IPR023493">
    <property type="entry name" value="Me_Trp_Oxase_MTOX"/>
</dbReference>
<dbReference type="InterPro" id="IPR045170">
    <property type="entry name" value="MTOX"/>
</dbReference>
<dbReference type="NCBIfam" id="NF008425">
    <property type="entry name" value="PRK11259.1"/>
    <property type="match status" value="1"/>
</dbReference>
<dbReference type="PANTHER" id="PTHR10961:SF7">
    <property type="entry name" value="FAD DEPENDENT OXIDOREDUCTASE DOMAIN-CONTAINING PROTEIN"/>
    <property type="match status" value="1"/>
</dbReference>
<dbReference type="PANTHER" id="PTHR10961">
    <property type="entry name" value="PEROXISOMAL SARCOSINE OXIDASE"/>
    <property type="match status" value="1"/>
</dbReference>
<dbReference type="Pfam" id="PF01266">
    <property type="entry name" value="DAO"/>
    <property type="match status" value="1"/>
</dbReference>
<dbReference type="SUPFAM" id="SSF54373">
    <property type="entry name" value="FAD-linked reductases, C-terminal domain"/>
    <property type="match status" value="1"/>
</dbReference>
<dbReference type="SUPFAM" id="SSF51905">
    <property type="entry name" value="FAD/NAD(P)-binding domain"/>
    <property type="match status" value="1"/>
</dbReference>